<accession>P9WN41</accession>
<accession>L0TCJ2</accession>
<accession>O06258</accession>
<accession>Q7D5J3</accession>
<sequence length="448" mass="45873">MGRLFGTDGVRGVANRELTAELALALGAAAARRLSRSGAPGRRVAVLGRDPRASGEMLEAAVIAGLTSEGVDALRVGVLPTPAVAYLTGAYDADFGVMISASHNPMPDNGIKIFGPGGHKLDDDTEDQIEDLVLGVSRGPGLRPAGAGIGRVIDAEDATERYLRHVAKAATARLDDLAVVVDCAHGAASSAAPRAYRAAGARVIAINAEPNGRNINDGCGSTHLDPLRAAVLAHRADLGLAHDGDADRCLAVDANGDLVDGDAIMVVLALAMKEAGELACNTLVATVMSNLGLHLAMRSAGVTVRTTAVGDRYVLEELRAGDYSLGGEQSGHIVMPALGSTGDGIVTGLRLMTRMVQTGSSLSDLASAMRTLPQVLINVEVVDKATAAAAPSVRTAVEQAAAELGDTGRILLRPSGTEPMIRVMVEAADEGVAQRLAATVADAVSTAR</sequence>
<evidence type="ECO:0000255" key="1">
    <source>
        <dbReference type="HAMAP-Rule" id="MF_01554"/>
    </source>
</evidence>
<keyword id="KW-0413">Isomerase</keyword>
<keyword id="KW-0460">Magnesium</keyword>
<keyword id="KW-0479">Metal-binding</keyword>
<keyword id="KW-0597">Phosphoprotein</keyword>
<keyword id="KW-1185">Reference proteome</keyword>
<protein>
    <recommendedName>
        <fullName evidence="1">Phosphoglucosamine mutase</fullName>
        <ecNumber evidence="1">5.4.2.10</ecNumber>
    </recommendedName>
</protein>
<gene>
    <name evidence="1" type="primary">glmM</name>
    <name type="ordered locus">Rv3441c</name>
</gene>
<reference key="1">
    <citation type="journal article" date="1998" name="Nature">
        <title>Deciphering the biology of Mycobacterium tuberculosis from the complete genome sequence.</title>
        <authorList>
            <person name="Cole S.T."/>
            <person name="Brosch R."/>
            <person name="Parkhill J."/>
            <person name="Garnier T."/>
            <person name="Churcher C.M."/>
            <person name="Harris D.E."/>
            <person name="Gordon S.V."/>
            <person name="Eiglmeier K."/>
            <person name="Gas S."/>
            <person name="Barry C.E. III"/>
            <person name="Tekaia F."/>
            <person name="Badcock K."/>
            <person name="Basham D."/>
            <person name="Brown D."/>
            <person name="Chillingworth T."/>
            <person name="Connor R."/>
            <person name="Davies R.M."/>
            <person name="Devlin K."/>
            <person name="Feltwell T."/>
            <person name="Gentles S."/>
            <person name="Hamlin N."/>
            <person name="Holroyd S."/>
            <person name="Hornsby T."/>
            <person name="Jagels K."/>
            <person name="Krogh A."/>
            <person name="McLean J."/>
            <person name="Moule S."/>
            <person name="Murphy L.D."/>
            <person name="Oliver S."/>
            <person name="Osborne J."/>
            <person name="Quail M.A."/>
            <person name="Rajandream M.A."/>
            <person name="Rogers J."/>
            <person name="Rutter S."/>
            <person name="Seeger K."/>
            <person name="Skelton S."/>
            <person name="Squares S."/>
            <person name="Squares R."/>
            <person name="Sulston J.E."/>
            <person name="Taylor K."/>
            <person name="Whitehead S."/>
            <person name="Barrell B.G."/>
        </authorList>
    </citation>
    <scope>NUCLEOTIDE SEQUENCE [LARGE SCALE GENOMIC DNA]</scope>
    <source>
        <strain>ATCC 25618 / H37Rv</strain>
    </source>
</reference>
<reference key="2">
    <citation type="journal article" date="2008" name="BMC Syst. Biol.">
        <title>targetTB: a target identification pipeline for Mycobacterium tuberculosis through an interactome, reactome and genome-scale structural analysis.</title>
        <authorList>
            <person name="Raman K."/>
            <person name="Yeturu K."/>
            <person name="Chandra N."/>
        </authorList>
    </citation>
    <scope>IDENTIFICATION AS A DRUG TARGET [LARGE SCALE ANALYSIS]</scope>
</reference>
<reference key="3">
    <citation type="journal article" date="2011" name="Mol. Cell. Proteomics">
        <title>Proteogenomic analysis of Mycobacterium tuberculosis by high resolution mass spectrometry.</title>
        <authorList>
            <person name="Kelkar D.S."/>
            <person name="Kumar D."/>
            <person name="Kumar P."/>
            <person name="Balakrishnan L."/>
            <person name="Muthusamy B."/>
            <person name="Yadav A.K."/>
            <person name="Shrivastava P."/>
            <person name="Marimuthu A."/>
            <person name="Anand S."/>
            <person name="Sundaram H."/>
            <person name="Kingsbury R."/>
            <person name="Harsha H.C."/>
            <person name="Nair B."/>
            <person name="Prasad T.S."/>
            <person name="Chauhan D.S."/>
            <person name="Katoch K."/>
            <person name="Katoch V.M."/>
            <person name="Kumar P."/>
            <person name="Chaerkady R."/>
            <person name="Ramachandran S."/>
            <person name="Dash D."/>
            <person name="Pandey A."/>
        </authorList>
    </citation>
    <scope>IDENTIFICATION BY MASS SPECTROMETRY [LARGE SCALE ANALYSIS]</scope>
    <source>
        <strain>ATCC 25618 / H37Rv</strain>
    </source>
</reference>
<comment type="function">
    <text evidence="1">Catalyzes the conversion of glucosamine-6-phosphate to glucosamine-1-phosphate.</text>
</comment>
<comment type="catalytic activity">
    <reaction evidence="1">
        <text>alpha-D-glucosamine 1-phosphate = D-glucosamine 6-phosphate</text>
        <dbReference type="Rhea" id="RHEA:23424"/>
        <dbReference type="ChEBI" id="CHEBI:58516"/>
        <dbReference type="ChEBI" id="CHEBI:58725"/>
        <dbReference type="EC" id="5.4.2.10"/>
    </reaction>
</comment>
<comment type="cofactor">
    <cofactor evidence="1">
        <name>Mg(2+)</name>
        <dbReference type="ChEBI" id="CHEBI:18420"/>
    </cofactor>
    <text evidence="1">Binds 1 Mg(2+) ion per subunit.</text>
</comment>
<comment type="PTM">
    <text evidence="1">Activated by phosphorylation.</text>
</comment>
<comment type="miscellaneous">
    <text>Was identified as a high-confidence drug target.</text>
</comment>
<comment type="similarity">
    <text evidence="1">Belongs to the phosphohexose mutase family.</text>
</comment>
<proteinExistence type="evidence at protein level"/>
<feature type="chain" id="PRO_0000147918" description="Phosphoglucosamine mutase">
    <location>
        <begin position="1"/>
        <end position="448"/>
    </location>
</feature>
<feature type="active site" description="Phosphoserine intermediate" evidence="1">
    <location>
        <position position="102"/>
    </location>
</feature>
<feature type="binding site" description="via phosphate group" evidence="1">
    <location>
        <position position="102"/>
    </location>
    <ligand>
        <name>Mg(2+)</name>
        <dbReference type="ChEBI" id="CHEBI:18420"/>
    </ligand>
</feature>
<feature type="binding site" evidence="1">
    <location>
        <position position="243"/>
    </location>
    <ligand>
        <name>Mg(2+)</name>
        <dbReference type="ChEBI" id="CHEBI:18420"/>
    </ligand>
</feature>
<feature type="binding site" evidence="1">
    <location>
        <position position="245"/>
    </location>
    <ligand>
        <name>Mg(2+)</name>
        <dbReference type="ChEBI" id="CHEBI:18420"/>
    </ligand>
</feature>
<feature type="binding site" evidence="1">
    <location>
        <position position="247"/>
    </location>
    <ligand>
        <name>Mg(2+)</name>
        <dbReference type="ChEBI" id="CHEBI:18420"/>
    </ligand>
</feature>
<feature type="modified residue" description="Phosphoserine" evidence="1">
    <location>
        <position position="102"/>
    </location>
</feature>
<name>GLMM_MYCTU</name>
<dbReference type="EC" id="5.4.2.10" evidence="1"/>
<dbReference type="EMBL" id="AL123456">
    <property type="protein sequence ID" value="CCP46263.1"/>
    <property type="molecule type" value="Genomic_DNA"/>
</dbReference>
<dbReference type="PIR" id="G70976">
    <property type="entry name" value="G70976"/>
</dbReference>
<dbReference type="RefSeq" id="WP_003418304.1">
    <property type="nucleotide sequence ID" value="NZ_NVQJ01000027.1"/>
</dbReference>
<dbReference type="SMR" id="P9WN41"/>
<dbReference type="FunCoup" id="P9WN41">
    <property type="interactions" value="341"/>
</dbReference>
<dbReference type="STRING" id="83332.Rv3441c"/>
<dbReference type="PaxDb" id="83332-Rv3441c"/>
<dbReference type="DNASU" id="887589"/>
<dbReference type="KEGG" id="mtu:Rv3441c"/>
<dbReference type="KEGG" id="mtv:RVBD_3441c"/>
<dbReference type="TubercuList" id="Rv3441c"/>
<dbReference type="eggNOG" id="COG1109">
    <property type="taxonomic scope" value="Bacteria"/>
</dbReference>
<dbReference type="InParanoid" id="P9WN41"/>
<dbReference type="OrthoDB" id="9803322at2"/>
<dbReference type="PhylomeDB" id="P9WN41"/>
<dbReference type="Proteomes" id="UP000001584">
    <property type="component" value="Chromosome"/>
</dbReference>
<dbReference type="GO" id="GO:0005829">
    <property type="term" value="C:cytosol"/>
    <property type="evidence" value="ECO:0000318"/>
    <property type="project" value="GO_Central"/>
</dbReference>
<dbReference type="GO" id="GO:0000287">
    <property type="term" value="F:magnesium ion binding"/>
    <property type="evidence" value="ECO:0007669"/>
    <property type="project" value="UniProtKB-UniRule"/>
</dbReference>
<dbReference type="GO" id="GO:0008966">
    <property type="term" value="F:phosphoglucosamine mutase activity"/>
    <property type="evidence" value="ECO:0000318"/>
    <property type="project" value="GO_Central"/>
</dbReference>
<dbReference type="GO" id="GO:0004615">
    <property type="term" value="F:phosphomannomutase activity"/>
    <property type="evidence" value="ECO:0000318"/>
    <property type="project" value="GO_Central"/>
</dbReference>
<dbReference type="GO" id="GO:0005975">
    <property type="term" value="P:carbohydrate metabolic process"/>
    <property type="evidence" value="ECO:0007669"/>
    <property type="project" value="InterPro"/>
</dbReference>
<dbReference type="GO" id="GO:0009252">
    <property type="term" value="P:peptidoglycan biosynthetic process"/>
    <property type="evidence" value="ECO:0000318"/>
    <property type="project" value="GO_Central"/>
</dbReference>
<dbReference type="GO" id="GO:0006048">
    <property type="term" value="P:UDP-N-acetylglucosamine biosynthetic process"/>
    <property type="evidence" value="ECO:0000318"/>
    <property type="project" value="GO_Central"/>
</dbReference>
<dbReference type="CDD" id="cd05802">
    <property type="entry name" value="GlmM"/>
    <property type="match status" value="1"/>
</dbReference>
<dbReference type="FunFam" id="3.30.310.50:FF:000001">
    <property type="entry name" value="Phosphoglucosamine mutase"/>
    <property type="match status" value="1"/>
</dbReference>
<dbReference type="FunFam" id="3.40.120.10:FF:000001">
    <property type="entry name" value="Phosphoglucosamine mutase"/>
    <property type="match status" value="1"/>
</dbReference>
<dbReference type="FunFam" id="3.40.120.10:FF:000002">
    <property type="entry name" value="Phosphoglucosamine mutase"/>
    <property type="match status" value="1"/>
</dbReference>
<dbReference type="Gene3D" id="3.40.120.10">
    <property type="entry name" value="Alpha-D-Glucose-1,6-Bisphosphate, subunit A, domain 3"/>
    <property type="match status" value="3"/>
</dbReference>
<dbReference type="Gene3D" id="3.30.310.50">
    <property type="entry name" value="Alpha-D-phosphohexomutase, C-terminal domain"/>
    <property type="match status" value="1"/>
</dbReference>
<dbReference type="HAMAP" id="MF_01554_B">
    <property type="entry name" value="GlmM_B"/>
    <property type="match status" value="1"/>
</dbReference>
<dbReference type="InterPro" id="IPR005844">
    <property type="entry name" value="A-D-PHexomutase_a/b/a-I"/>
</dbReference>
<dbReference type="InterPro" id="IPR016055">
    <property type="entry name" value="A-D-PHexomutase_a/b/a-I/II/III"/>
</dbReference>
<dbReference type="InterPro" id="IPR005845">
    <property type="entry name" value="A-D-PHexomutase_a/b/a-II"/>
</dbReference>
<dbReference type="InterPro" id="IPR005846">
    <property type="entry name" value="A-D-PHexomutase_a/b/a-III"/>
</dbReference>
<dbReference type="InterPro" id="IPR005843">
    <property type="entry name" value="A-D-PHexomutase_C"/>
</dbReference>
<dbReference type="InterPro" id="IPR036900">
    <property type="entry name" value="A-D-PHexomutase_C_sf"/>
</dbReference>
<dbReference type="InterPro" id="IPR016066">
    <property type="entry name" value="A-D-PHexomutase_CS"/>
</dbReference>
<dbReference type="InterPro" id="IPR005841">
    <property type="entry name" value="Alpha-D-phosphohexomutase_SF"/>
</dbReference>
<dbReference type="InterPro" id="IPR006352">
    <property type="entry name" value="GlmM_bact"/>
</dbReference>
<dbReference type="InterPro" id="IPR050060">
    <property type="entry name" value="Phosphoglucosamine_mutase"/>
</dbReference>
<dbReference type="NCBIfam" id="TIGR01455">
    <property type="entry name" value="glmM"/>
    <property type="match status" value="1"/>
</dbReference>
<dbReference type="PANTHER" id="PTHR42946:SF1">
    <property type="entry name" value="PHOSPHOGLUCOMUTASE (ALPHA-D-GLUCOSE-1,6-BISPHOSPHATE-DEPENDENT)"/>
    <property type="match status" value="1"/>
</dbReference>
<dbReference type="PANTHER" id="PTHR42946">
    <property type="entry name" value="PHOSPHOHEXOSE MUTASE"/>
    <property type="match status" value="1"/>
</dbReference>
<dbReference type="Pfam" id="PF02878">
    <property type="entry name" value="PGM_PMM_I"/>
    <property type="match status" value="1"/>
</dbReference>
<dbReference type="Pfam" id="PF02879">
    <property type="entry name" value="PGM_PMM_II"/>
    <property type="match status" value="1"/>
</dbReference>
<dbReference type="Pfam" id="PF02880">
    <property type="entry name" value="PGM_PMM_III"/>
    <property type="match status" value="1"/>
</dbReference>
<dbReference type="Pfam" id="PF00408">
    <property type="entry name" value="PGM_PMM_IV"/>
    <property type="match status" value="1"/>
</dbReference>
<dbReference type="PRINTS" id="PR00509">
    <property type="entry name" value="PGMPMM"/>
</dbReference>
<dbReference type="SUPFAM" id="SSF55957">
    <property type="entry name" value="Phosphoglucomutase, C-terminal domain"/>
    <property type="match status" value="1"/>
</dbReference>
<dbReference type="SUPFAM" id="SSF53738">
    <property type="entry name" value="Phosphoglucomutase, first 3 domains"/>
    <property type="match status" value="3"/>
</dbReference>
<dbReference type="PROSITE" id="PS00710">
    <property type="entry name" value="PGM_PMM"/>
    <property type="match status" value="1"/>
</dbReference>
<organism>
    <name type="scientific">Mycobacterium tuberculosis (strain ATCC 25618 / H37Rv)</name>
    <dbReference type="NCBI Taxonomy" id="83332"/>
    <lineage>
        <taxon>Bacteria</taxon>
        <taxon>Bacillati</taxon>
        <taxon>Actinomycetota</taxon>
        <taxon>Actinomycetes</taxon>
        <taxon>Mycobacteriales</taxon>
        <taxon>Mycobacteriaceae</taxon>
        <taxon>Mycobacterium</taxon>
        <taxon>Mycobacterium tuberculosis complex</taxon>
    </lineage>
</organism>